<organism>
    <name type="scientific">Mycoplasma pneumoniae (strain ATCC 29342 / M129 / Subtype 1)</name>
    <name type="common">Mycoplasmoides pneumoniae</name>
    <dbReference type="NCBI Taxonomy" id="272634"/>
    <lineage>
        <taxon>Bacteria</taxon>
        <taxon>Bacillati</taxon>
        <taxon>Mycoplasmatota</taxon>
        <taxon>Mycoplasmoidales</taxon>
        <taxon>Mycoplasmoidaceae</taxon>
        <taxon>Mycoplasmoides</taxon>
    </lineage>
</organism>
<sequence length="287" mass="31786">MLLFINRFAKTIILLFGMLVFLVLLGLGGAALYFKDNAAKLYIDTRKSIDSSFDSSQAFIDTYNGSSSKFSVESINKQIEEVKKKVEESTKKLEEYEKQINQAKGLNGYLVSPEKLKELQEAKKSLQATKSQIEKYANTLKTANNGKTGQNGTSSSTIPITKISGSTISVSTRDTNGKTNSALKDIQEFSTQANDIIKQYKEIKNKIPTEKQFNEYYTIGAITLVSVSGGVLAVLIVSTVMTFLGSKKLGLRTFSRLTSTDQIADHVNDILDRYPELEDAVLEELDQ</sequence>
<evidence type="ECO:0000255" key="1"/>
<evidence type="ECO:0000305" key="2"/>
<comment type="subcellular location">
    <subcellularLocation>
        <location evidence="2">Cell membrane</location>
        <topology evidence="2">Multi-pass membrane protein</topology>
    </subcellularLocation>
</comment>
<protein>
    <recommendedName>
        <fullName>Uncharacterized protein MG280 homolog</fullName>
    </recommendedName>
</protein>
<keyword id="KW-1003">Cell membrane</keyword>
<keyword id="KW-0472">Membrane</keyword>
<keyword id="KW-1185">Reference proteome</keyword>
<keyword id="KW-0812">Transmembrane</keyword>
<keyword id="KW-1133">Transmembrane helix</keyword>
<name>Y399_MYCPN</name>
<accession>P75384</accession>
<dbReference type="EMBL" id="U00089">
    <property type="protein sequence ID" value="AAB96087.1"/>
    <property type="molecule type" value="Genomic_DNA"/>
</dbReference>
<dbReference type="PIR" id="S73765">
    <property type="entry name" value="S73765"/>
</dbReference>
<dbReference type="RefSeq" id="NP_110087.1">
    <property type="nucleotide sequence ID" value="NC_000912.1"/>
</dbReference>
<dbReference type="RefSeq" id="WP_010874755.1">
    <property type="nucleotide sequence ID" value="NZ_OU342337.1"/>
</dbReference>
<dbReference type="SMR" id="P75384"/>
<dbReference type="IntAct" id="P75384">
    <property type="interactions" value="2"/>
</dbReference>
<dbReference type="STRING" id="272634.MPN_399"/>
<dbReference type="EnsemblBacteria" id="AAB96087">
    <property type="protein sequence ID" value="AAB96087"/>
    <property type="gene ID" value="MPN_399"/>
</dbReference>
<dbReference type="KEGG" id="mpn:MPN_399"/>
<dbReference type="PATRIC" id="fig|272634.6.peg.430"/>
<dbReference type="HOGENOM" id="CLU_1048959_0_0_14"/>
<dbReference type="OrthoDB" id="10011054at2"/>
<dbReference type="BioCyc" id="MPNE272634:G1GJ3-633-MONOMER"/>
<dbReference type="Proteomes" id="UP000000808">
    <property type="component" value="Chromosome"/>
</dbReference>
<dbReference type="GO" id="GO:0005886">
    <property type="term" value="C:plasma membrane"/>
    <property type="evidence" value="ECO:0007669"/>
    <property type="project" value="UniProtKB-SubCell"/>
</dbReference>
<dbReference type="InterPro" id="IPR030940">
    <property type="entry name" value="MG279/MG280"/>
</dbReference>
<dbReference type="NCBIfam" id="TIGR04527">
    <property type="entry name" value="mycoplas_twoTM"/>
    <property type="match status" value="1"/>
</dbReference>
<dbReference type="Pfam" id="PF23067">
    <property type="entry name" value="MG280"/>
    <property type="match status" value="1"/>
</dbReference>
<gene>
    <name type="ordered locus">MPN_399</name>
    <name type="ORF">F11_orf287</name>
    <name type="ORF">MP439</name>
</gene>
<reference key="1">
    <citation type="journal article" date="1996" name="Nucleic Acids Res.">
        <title>Complete sequence analysis of the genome of the bacterium Mycoplasma pneumoniae.</title>
        <authorList>
            <person name="Himmelreich R."/>
            <person name="Hilbert H."/>
            <person name="Plagens H."/>
            <person name="Pirkl E."/>
            <person name="Li B.-C."/>
            <person name="Herrmann R."/>
        </authorList>
    </citation>
    <scope>NUCLEOTIDE SEQUENCE [LARGE SCALE GENOMIC DNA]</scope>
    <source>
        <strain>ATCC 29342 / M129 / Subtype 1</strain>
    </source>
</reference>
<feature type="chain" id="PRO_0000210507" description="Uncharacterized protein MG280 homolog">
    <location>
        <begin position="1"/>
        <end position="287"/>
    </location>
</feature>
<feature type="transmembrane region" description="Helical" evidence="1">
    <location>
        <begin position="12"/>
        <end position="32"/>
    </location>
</feature>
<feature type="transmembrane region" description="Helical" evidence="1">
    <location>
        <begin position="217"/>
        <end position="237"/>
    </location>
</feature>
<proteinExistence type="predicted"/>